<gene>
    <name evidence="1" type="primary">dtd</name>
    <name type="ordered locus">BCE33L4150</name>
</gene>
<keyword id="KW-0963">Cytoplasm</keyword>
<keyword id="KW-0378">Hydrolase</keyword>
<keyword id="KW-0694">RNA-binding</keyword>
<keyword id="KW-0820">tRNA-binding</keyword>
<protein>
    <recommendedName>
        <fullName evidence="1">D-aminoacyl-tRNA deacylase</fullName>
        <shortName evidence="1">DTD</shortName>
        <ecNumber evidence="1">3.1.1.96</ecNumber>
    </recommendedName>
    <alternativeName>
        <fullName evidence="1">Gly-tRNA(Ala) deacylase</fullName>
    </alternativeName>
</protein>
<accession>Q634D8</accession>
<sequence>MRVVLQRSKEASVTVDGEIVGQIPFGLTLLVGITHEDTEKDATYIAEKIANLRIFEDESGKMNHSVLDVEGQVLSISQFTLYGDCRKGRRPNFMDAAKPDYAERLYDFFNEEVRKQGLHVETGKFGAMMDVSLINDGPVTLIVESK</sequence>
<feature type="chain" id="PRO_0000164518" description="D-aminoacyl-tRNA deacylase">
    <location>
        <begin position="1"/>
        <end position="146"/>
    </location>
</feature>
<feature type="short sequence motif" description="Gly-cisPro motif, important for rejection of L-amino acids" evidence="1">
    <location>
        <begin position="137"/>
        <end position="138"/>
    </location>
</feature>
<reference key="1">
    <citation type="journal article" date="2006" name="J. Bacteriol.">
        <title>Pathogenomic sequence analysis of Bacillus cereus and Bacillus thuringiensis isolates closely related to Bacillus anthracis.</title>
        <authorList>
            <person name="Han C.S."/>
            <person name="Xie G."/>
            <person name="Challacombe J.F."/>
            <person name="Altherr M.R."/>
            <person name="Bhotika S.S."/>
            <person name="Bruce D."/>
            <person name="Campbell C.S."/>
            <person name="Campbell M.L."/>
            <person name="Chen J."/>
            <person name="Chertkov O."/>
            <person name="Cleland C."/>
            <person name="Dimitrijevic M."/>
            <person name="Doggett N.A."/>
            <person name="Fawcett J.J."/>
            <person name="Glavina T."/>
            <person name="Goodwin L.A."/>
            <person name="Hill K.K."/>
            <person name="Hitchcock P."/>
            <person name="Jackson P.J."/>
            <person name="Keim P."/>
            <person name="Kewalramani A.R."/>
            <person name="Longmire J."/>
            <person name="Lucas S."/>
            <person name="Malfatti S."/>
            <person name="McMurry K."/>
            <person name="Meincke L.J."/>
            <person name="Misra M."/>
            <person name="Moseman B.L."/>
            <person name="Mundt M."/>
            <person name="Munk A.C."/>
            <person name="Okinaka R.T."/>
            <person name="Parson-Quintana B."/>
            <person name="Reilly L.P."/>
            <person name="Richardson P."/>
            <person name="Robinson D.L."/>
            <person name="Rubin E."/>
            <person name="Saunders E."/>
            <person name="Tapia R."/>
            <person name="Tesmer J.G."/>
            <person name="Thayer N."/>
            <person name="Thompson L.S."/>
            <person name="Tice H."/>
            <person name="Ticknor L.O."/>
            <person name="Wills P.L."/>
            <person name="Brettin T.S."/>
            <person name="Gilna P."/>
        </authorList>
    </citation>
    <scope>NUCLEOTIDE SEQUENCE [LARGE SCALE GENOMIC DNA]</scope>
    <source>
        <strain>ZK / E33L</strain>
    </source>
</reference>
<dbReference type="EC" id="3.1.1.96" evidence="1"/>
<dbReference type="EMBL" id="CP000001">
    <property type="protein sequence ID" value="AAU16118.1"/>
    <property type="molecule type" value="Genomic_DNA"/>
</dbReference>
<dbReference type="RefSeq" id="WP_001266956.1">
    <property type="nucleotide sequence ID" value="NZ_CP009968.1"/>
</dbReference>
<dbReference type="SMR" id="Q634D8"/>
<dbReference type="KEGG" id="bcz:BCE33L4150"/>
<dbReference type="PATRIC" id="fig|288681.22.peg.1233"/>
<dbReference type="Proteomes" id="UP000002612">
    <property type="component" value="Chromosome"/>
</dbReference>
<dbReference type="GO" id="GO:0005737">
    <property type="term" value="C:cytoplasm"/>
    <property type="evidence" value="ECO:0007669"/>
    <property type="project" value="UniProtKB-SubCell"/>
</dbReference>
<dbReference type="GO" id="GO:0051500">
    <property type="term" value="F:D-tyrosyl-tRNA(Tyr) deacylase activity"/>
    <property type="evidence" value="ECO:0007669"/>
    <property type="project" value="TreeGrafter"/>
</dbReference>
<dbReference type="GO" id="GO:0106026">
    <property type="term" value="F:Gly-tRNA(Ala) deacylase activity"/>
    <property type="evidence" value="ECO:0007669"/>
    <property type="project" value="UniProtKB-UniRule"/>
</dbReference>
<dbReference type="GO" id="GO:0043908">
    <property type="term" value="F:Ser(Gly)-tRNA(Ala) hydrolase activity"/>
    <property type="evidence" value="ECO:0007669"/>
    <property type="project" value="UniProtKB-UniRule"/>
</dbReference>
<dbReference type="GO" id="GO:0000049">
    <property type="term" value="F:tRNA binding"/>
    <property type="evidence" value="ECO:0007669"/>
    <property type="project" value="UniProtKB-UniRule"/>
</dbReference>
<dbReference type="GO" id="GO:0019478">
    <property type="term" value="P:D-amino acid catabolic process"/>
    <property type="evidence" value="ECO:0007669"/>
    <property type="project" value="UniProtKB-UniRule"/>
</dbReference>
<dbReference type="CDD" id="cd00563">
    <property type="entry name" value="Dtyr_deacylase"/>
    <property type="match status" value="1"/>
</dbReference>
<dbReference type="FunFam" id="3.50.80.10:FF:000001">
    <property type="entry name" value="D-aminoacyl-tRNA deacylase"/>
    <property type="match status" value="1"/>
</dbReference>
<dbReference type="Gene3D" id="3.50.80.10">
    <property type="entry name" value="D-tyrosyl-tRNA(Tyr) deacylase"/>
    <property type="match status" value="1"/>
</dbReference>
<dbReference type="HAMAP" id="MF_00518">
    <property type="entry name" value="Deacylase_Dtd"/>
    <property type="match status" value="1"/>
</dbReference>
<dbReference type="InterPro" id="IPR003732">
    <property type="entry name" value="Daa-tRNA_deacyls_DTD"/>
</dbReference>
<dbReference type="InterPro" id="IPR023509">
    <property type="entry name" value="DTD-like_sf"/>
</dbReference>
<dbReference type="NCBIfam" id="TIGR00256">
    <property type="entry name" value="D-aminoacyl-tRNA deacylase"/>
    <property type="match status" value="1"/>
</dbReference>
<dbReference type="PANTHER" id="PTHR10472:SF5">
    <property type="entry name" value="D-AMINOACYL-TRNA DEACYLASE 1"/>
    <property type="match status" value="1"/>
</dbReference>
<dbReference type="PANTHER" id="PTHR10472">
    <property type="entry name" value="D-TYROSYL-TRNA TYR DEACYLASE"/>
    <property type="match status" value="1"/>
</dbReference>
<dbReference type="Pfam" id="PF02580">
    <property type="entry name" value="Tyr_Deacylase"/>
    <property type="match status" value="1"/>
</dbReference>
<dbReference type="SUPFAM" id="SSF69500">
    <property type="entry name" value="DTD-like"/>
    <property type="match status" value="1"/>
</dbReference>
<comment type="function">
    <text evidence="1">An aminoacyl-tRNA editing enzyme that deacylates mischarged D-aminoacyl-tRNAs. Also deacylates mischarged glycyl-tRNA(Ala), protecting cells against glycine mischarging by AlaRS. Acts via tRNA-based rather than protein-based catalysis; rejects L-amino acids rather than detecting D-amino acids in the active site. By recycling D-aminoacyl-tRNA to D-amino acids and free tRNA molecules, this enzyme counteracts the toxicity associated with the formation of D-aminoacyl-tRNA entities in vivo and helps enforce protein L-homochirality.</text>
</comment>
<comment type="catalytic activity">
    <reaction evidence="1">
        <text>glycyl-tRNA(Ala) + H2O = tRNA(Ala) + glycine + H(+)</text>
        <dbReference type="Rhea" id="RHEA:53744"/>
        <dbReference type="Rhea" id="RHEA-COMP:9657"/>
        <dbReference type="Rhea" id="RHEA-COMP:13640"/>
        <dbReference type="ChEBI" id="CHEBI:15377"/>
        <dbReference type="ChEBI" id="CHEBI:15378"/>
        <dbReference type="ChEBI" id="CHEBI:57305"/>
        <dbReference type="ChEBI" id="CHEBI:78442"/>
        <dbReference type="ChEBI" id="CHEBI:78522"/>
        <dbReference type="EC" id="3.1.1.96"/>
    </reaction>
</comment>
<comment type="catalytic activity">
    <reaction evidence="1">
        <text>a D-aminoacyl-tRNA + H2O = a tRNA + a D-alpha-amino acid + H(+)</text>
        <dbReference type="Rhea" id="RHEA:13953"/>
        <dbReference type="Rhea" id="RHEA-COMP:10123"/>
        <dbReference type="Rhea" id="RHEA-COMP:10124"/>
        <dbReference type="ChEBI" id="CHEBI:15377"/>
        <dbReference type="ChEBI" id="CHEBI:15378"/>
        <dbReference type="ChEBI" id="CHEBI:59871"/>
        <dbReference type="ChEBI" id="CHEBI:78442"/>
        <dbReference type="ChEBI" id="CHEBI:79333"/>
        <dbReference type="EC" id="3.1.1.96"/>
    </reaction>
</comment>
<comment type="subunit">
    <text evidence="1">Homodimer.</text>
</comment>
<comment type="subcellular location">
    <subcellularLocation>
        <location evidence="1">Cytoplasm</location>
    </subcellularLocation>
</comment>
<comment type="domain">
    <text evidence="1">A Gly-cisPro motif from one monomer fits into the active site of the other monomer to allow specific chiral rejection of L-amino acids.</text>
</comment>
<comment type="similarity">
    <text evidence="1">Belongs to the DTD family.</text>
</comment>
<organism>
    <name type="scientific">Bacillus cereus (strain ZK / E33L)</name>
    <dbReference type="NCBI Taxonomy" id="288681"/>
    <lineage>
        <taxon>Bacteria</taxon>
        <taxon>Bacillati</taxon>
        <taxon>Bacillota</taxon>
        <taxon>Bacilli</taxon>
        <taxon>Bacillales</taxon>
        <taxon>Bacillaceae</taxon>
        <taxon>Bacillus</taxon>
        <taxon>Bacillus cereus group</taxon>
    </lineage>
</organism>
<evidence type="ECO:0000255" key="1">
    <source>
        <dbReference type="HAMAP-Rule" id="MF_00518"/>
    </source>
</evidence>
<proteinExistence type="inferred from homology"/>
<name>DTD_BACCZ</name>